<sequence>MRVSTIRSGRICRLALCLLVLLPLLYLLANWSDHHKRVQEAYHTRFGGPKFAHQRLEGRPREVPKLVDGLGNFEPKDVKPRSGPGENGEAHSLSPDKKHMSDASEMEYGMNIACSDEISMHRSVRDTRLEECRHWDYPFDLPRTSVIIVFHNEGFSVLMRTVHSVIDRSPTHMLHEIILVDDFSDKENLRSQLDEYVLQFKGLVKVIRNKEREGLIRTRSRGAMEATGEVIVFLDAHCEVNTNWLPPLLAPIYRDRTVMTVPIIDGIDHKNFEYRPVYGTDNHFRGIFEWGMLYKENEVPRREQRRRAHNSEPYRSPTHAGGLFAINREYFLELGAYDPGLLVWGGENFELSFKIWQCGGSIEWVPCSRVGHVYRGFMPYNFGKLASKKKGPLITINYKRVIETWFDDTHKEYFYTREPLARYLDMGDISEQLALKKRLNCKSFQWFMDHIAYDVYDKFPGLPANLHWGELRSVASDGCLDSMGHQPPAIMGLTYCHGGGNNQLVRLNAAGQLGVGERCVEADRQGIKLAVCRLGTVDGPWQYNEHTKHLMHRVHKKCMALHPATQQLSLGHCDVNDSYQQWWFKEIRPRW</sequence>
<dbReference type="EC" id="2.4.1.41" evidence="5 6"/>
<dbReference type="EMBL" id="AF493067">
    <property type="protein sequence ID" value="AAM62412.1"/>
    <property type="molecule type" value="mRNA"/>
</dbReference>
<dbReference type="EMBL" id="AY268068">
    <property type="protein sequence ID" value="AAQ56704.1"/>
    <property type="molecule type" value="mRNA"/>
</dbReference>
<dbReference type="EMBL" id="AE014298">
    <property type="protein sequence ID" value="AAF48851.1"/>
    <property type="molecule type" value="Genomic_DNA"/>
</dbReference>
<dbReference type="EMBL" id="AE014298">
    <property type="protein sequence ID" value="AAN09470.1"/>
    <property type="molecule type" value="Genomic_DNA"/>
</dbReference>
<dbReference type="EMBL" id="BT016123">
    <property type="protein sequence ID" value="AAV37008.1"/>
    <property type="molecule type" value="mRNA"/>
</dbReference>
<dbReference type="EMBL" id="AY058660">
    <property type="protein sequence ID" value="AAL13889.1"/>
    <property type="status" value="ALT_INIT"/>
    <property type="molecule type" value="mRNA"/>
</dbReference>
<dbReference type="EMBL" id="AY061339">
    <property type="protein sequence ID" value="AAL28887.1"/>
    <property type="status" value="ALT_INIT"/>
    <property type="molecule type" value="mRNA"/>
</dbReference>
<dbReference type="RefSeq" id="NP_001285406.1">
    <property type="nucleotide sequence ID" value="NM_001298477.1"/>
</dbReference>
<dbReference type="RefSeq" id="NP_573301.2">
    <property type="nucleotide sequence ID" value="NM_133073.3"/>
</dbReference>
<dbReference type="RefSeq" id="NP_728178.1">
    <property type="nucleotide sequence ID" value="NM_167623.2"/>
</dbReference>
<dbReference type="SMR" id="Q8MV48"/>
<dbReference type="BioGRID" id="59149">
    <property type="interactions" value="5"/>
</dbReference>
<dbReference type="FunCoup" id="Q8MV48">
    <property type="interactions" value="1324"/>
</dbReference>
<dbReference type="IntAct" id="Q8MV48">
    <property type="interactions" value="6"/>
</dbReference>
<dbReference type="STRING" id="7227.FBpp0311917"/>
<dbReference type="CAZy" id="CBM13">
    <property type="family name" value="Carbohydrate-Binding Module Family 13"/>
</dbReference>
<dbReference type="CAZy" id="GT27">
    <property type="family name" value="Glycosyltransferase Family 27"/>
</dbReference>
<dbReference type="GlyCosmos" id="Q8MV48">
    <property type="glycosylation" value="2 sites, No reported glycans"/>
</dbReference>
<dbReference type="GlyGen" id="Q8MV48">
    <property type="glycosylation" value="2 sites"/>
</dbReference>
<dbReference type="SwissPalm" id="Q8MV48"/>
<dbReference type="PaxDb" id="7227-FBpp0074396"/>
<dbReference type="DNASU" id="32836"/>
<dbReference type="EnsemblMetazoa" id="FBtr0074624">
    <property type="protein sequence ID" value="FBpp0074395"/>
    <property type="gene ID" value="FBgn0030930"/>
</dbReference>
<dbReference type="EnsemblMetazoa" id="FBtr0074625">
    <property type="protein sequence ID" value="FBpp0074396"/>
    <property type="gene ID" value="FBgn0030930"/>
</dbReference>
<dbReference type="EnsemblMetazoa" id="FBtr0346082">
    <property type="protein sequence ID" value="FBpp0311917"/>
    <property type="gene ID" value="FBgn0030930"/>
</dbReference>
<dbReference type="GeneID" id="32836"/>
<dbReference type="KEGG" id="dme:Dmel_CG6394"/>
<dbReference type="UCSC" id="CG6394-RB">
    <property type="organism name" value="d. melanogaster"/>
</dbReference>
<dbReference type="AGR" id="FB:FBgn0030930"/>
<dbReference type="CTD" id="32836"/>
<dbReference type="FlyBase" id="FBgn0030930">
    <property type="gene designation" value="Pgant7"/>
</dbReference>
<dbReference type="VEuPathDB" id="VectorBase:FBgn0030930"/>
<dbReference type="eggNOG" id="KOG3737">
    <property type="taxonomic scope" value="Eukaryota"/>
</dbReference>
<dbReference type="HOGENOM" id="CLU_013477_0_1_1"/>
<dbReference type="InParanoid" id="Q8MV48"/>
<dbReference type="OMA" id="QWFMDNI"/>
<dbReference type="OrthoDB" id="6072411at2759"/>
<dbReference type="PhylomeDB" id="Q8MV48"/>
<dbReference type="BRENDA" id="2.4.1.41">
    <property type="organism ID" value="1994"/>
</dbReference>
<dbReference type="Reactome" id="R-DME-913709">
    <property type="pathway name" value="O-linked glycosylation of mucins"/>
</dbReference>
<dbReference type="UniPathway" id="UPA00378"/>
<dbReference type="BioGRID-ORCS" id="32836">
    <property type="hits" value="0 hits in 1 CRISPR screen"/>
</dbReference>
<dbReference type="GenomeRNAi" id="32836"/>
<dbReference type="PRO" id="PR:Q8MV48"/>
<dbReference type="Proteomes" id="UP000000803">
    <property type="component" value="Chromosome X"/>
</dbReference>
<dbReference type="Bgee" id="FBgn0030930">
    <property type="expression patterns" value="Expressed in hindgut proper primordium (Drosophila) and 87 other cell types or tissues"/>
</dbReference>
<dbReference type="ExpressionAtlas" id="Q8MV48">
    <property type="expression patterns" value="baseline and differential"/>
</dbReference>
<dbReference type="GO" id="GO:0012505">
    <property type="term" value="C:endomembrane system"/>
    <property type="evidence" value="ECO:0007005"/>
    <property type="project" value="FlyBase"/>
</dbReference>
<dbReference type="GO" id="GO:0005794">
    <property type="term" value="C:Golgi apparatus"/>
    <property type="evidence" value="ECO:0000318"/>
    <property type="project" value="GO_Central"/>
</dbReference>
<dbReference type="GO" id="GO:0000139">
    <property type="term" value="C:Golgi membrane"/>
    <property type="evidence" value="ECO:0000304"/>
    <property type="project" value="FlyBase"/>
</dbReference>
<dbReference type="GO" id="GO:0005795">
    <property type="term" value="C:Golgi stack"/>
    <property type="evidence" value="ECO:0000303"/>
    <property type="project" value="UniProtKB"/>
</dbReference>
<dbReference type="GO" id="GO:0030246">
    <property type="term" value="F:carbohydrate binding"/>
    <property type="evidence" value="ECO:0007669"/>
    <property type="project" value="UniProtKB-KW"/>
</dbReference>
<dbReference type="GO" id="GO:0046872">
    <property type="term" value="F:metal ion binding"/>
    <property type="evidence" value="ECO:0007669"/>
    <property type="project" value="UniProtKB-KW"/>
</dbReference>
<dbReference type="GO" id="GO:0004653">
    <property type="term" value="F:polypeptide N-acetylgalactosaminyltransferase activity"/>
    <property type="evidence" value="ECO:0000314"/>
    <property type="project" value="UniProtKB"/>
</dbReference>
<dbReference type="GO" id="GO:0006493">
    <property type="term" value="P:protein O-linked glycosylation"/>
    <property type="evidence" value="ECO:0000314"/>
    <property type="project" value="UniProtKB"/>
</dbReference>
<dbReference type="CDD" id="cd23437">
    <property type="entry name" value="beta-trefoil_Ricin_GALNT7"/>
    <property type="match status" value="1"/>
</dbReference>
<dbReference type="CDD" id="cd02510">
    <property type="entry name" value="pp-GalNAc-T"/>
    <property type="match status" value="1"/>
</dbReference>
<dbReference type="FunFam" id="2.80.10.50:FF:000019">
    <property type="entry name" value="Polypeptide N-acetylgalactosaminyltransferase"/>
    <property type="match status" value="1"/>
</dbReference>
<dbReference type="FunFam" id="3.90.550.10:FF:000053">
    <property type="entry name" value="Polypeptide N-acetylgalactosaminyltransferase"/>
    <property type="match status" value="1"/>
</dbReference>
<dbReference type="Gene3D" id="2.80.10.50">
    <property type="match status" value="1"/>
</dbReference>
<dbReference type="Gene3D" id="3.90.550.10">
    <property type="entry name" value="Spore Coat Polysaccharide Biosynthesis Protein SpsA, Chain A"/>
    <property type="match status" value="1"/>
</dbReference>
<dbReference type="InterPro" id="IPR045885">
    <property type="entry name" value="GalNAc-T"/>
</dbReference>
<dbReference type="InterPro" id="IPR001173">
    <property type="entry name" value="Glyco_trans_2-like"/>
</dbReference>
<dbReference type="InterPro" id="IPR029044">
    <property type="entry name" value="Nucleotide-diphossugar_trans"/>
</dbReference>
<dbReference type="InterPro" id="IPR035992">
    <property type="entry name" value="Ricin_B-like_lectins"/>
</dbReference>
<dbReference type="InterPro" id="IPR000772">
    <property type="entry name" value="Ricin_B_lectin"/>
</dbReference>
<dbReference type="PANTHER" id="PTHR11675">
    <property type="entry name" value="N-ACETYLGALACTOSAMINYLTRANSFERASE"/>
    <property type="match status" value="1"/>
</dbReference>
<dbReference type="PANTHER" id="PTHR11675:SF68">
    <property type="entry name" value="N-ACETYLGALACTOSAMINYLTRANSFERASE 7"/>
    <property type="match status" value="1"/>
</dbReference>
<dbReference type="Pfam" id="PF00535">
    <property type="entry name" value="Glycos_transf_2"/>
    <property type="match status" value="1"/>
</dbReference>
<dbReference type="Pfam" id="PF00652">
    <property type="entry name" value="Ricin_B_lectin"/>
    <property type="match status" value="1"/>
</dbReference>
<dbReference type="SMART" id="SM00458">
    <property type="entry name" value="RICIN"/>
    <property type="match status" value="1"/>
</dbReference>
<dbReference type="SUPFAM" id="SSF53448">
    <property type="entry name" value="Nucleotide-diphospho-sugar transferases"/>
    <property type="match status" value="1"/>
</dbReference>
<dbReference type="SUPFAM" id="SSF50370">
    <property type="entry name" value="Ricin B-like lectins"/>
    <property type="match status" value="1"/>
</dbReference>
<dbReference type="PROSITE" id="PS50231">
    <property type="entry name" value="RICIN_B_LECTIN"/>
    <property type="match status" value="1"/>
</dbReference>
<feature type="chain" id="PRO_0000059161" description="N-acetylgalactosaminyltransferase 7">
    <location>
        <begin position="1"/>
        <end position="591"/>
    </location>
</feature>
<feature type="topological domain" description="Cytoplasmic" evidence="2">
    <location>
        <begin position="1"/>
        <end position="11"/>
    </location>
</feature>
<feature type="transmembrane region" description="Helical; Signal-anchor for type II membrane protein" evidence="2">
    <location>
        <begin position="12"/>
        <end position="29"/>
    </location>
</feature>
<feature type="topological domain" description="Lumenal" evidence="2">
    <location>
        <begin position="30"/>
        <end position="591"/>
    </location>
</feature>
<feature type="domain" description="Ricin B-type lectin" evidence="3">
    <location>
        <begin position="466"/>
        <end position="585"/>
    </location>
</feature>
<feature type="region of interest" description="Disordered" evidence="4">
    <location>
        <begin position="68"/>
        <end position="100"/>
    </location>
</feature>
<feature type="region of interest" description="Catalytic subdomain A">
    <location>
        <begin position="141"/>
        <end position="251"/>
    </location>
</feature>
<feature type="region of interest" description="Catalytic subdomain B">
    <location>
        <begin position="313"/>
        <end position="375"/>
    </location>
</feature>
<feature type="binding site" evidence="1">
    <location>
        <position position="182"/>
    </location>
    <ligand>
        <name>substrate</name>
    </ligand>
</feature>
<feature type="binding site" evidence="1">
    <location>
        <position position="212"/>
    </location>
    <ligand>
        <name>substrate</name>
    </ligand>
</feature>
<feature type="binding site" evidence="1">
    <location>
        <position position="235"/>
    </location>
    <ligand>
        <name>Mn(2+)</name>
        <dbReference type="ChEBI" id="CHEBI:29035"/>
    </ligand>
</feature>
<feature type="binding site" evidence="1">
    <location>
        <position position="237"/>
    </location>
    <ligand>
        <name>Mn(2+)</name>
        <dbReference type="ChEBI" id="CHEBI:29035"/>
    </ligand>
</feature>
<feature type="binding site" evidence="1">
    <location>
        <position position="344"/>
    </location>
    <ligand>
        <name>substrate</name>
    </ligand>
</feature>
<feature type="binding site" evidence="1">
    <location>
        <position position="372"/>
    </location>
    <ligand>
        <name>Mn(2+)</name>
        <dbReference type="ChEBI" id="CHEBI:29035"/>
    </ligand>
</feature>
<feature type="binding site" evidence="1">
    <location>
        <position position="375"/>
    </location>
    <ligand>
        <name>substrate</name>
    </ligand>
</feature>
<feature type="binding site" evidence="1">
    <location>
        <position position="380"/>
    </location>
    <ligand>
        <name>substrate</name>
    </ligand>
</feature>
<feature type="glycosylation site" description="N-linked (GlcNAc...) asparagine" evidence="2">
    <location>
        <position position="30"/>
    </location>
</feature>
<feature type="glycosylation site" description="N-linked (GlcNAc...) asparagine" evidence="2">
    <location>
        <position position="576"/>
    </location>
</feature>
<feature type="disulfide bond" evidence="3">
    <location>
        <begin position="132"/>
        <end position="367"/>
    </location>
</feature>
<feature type="disulfide bond" evidence="3">
    <location>
        <begin position="358"/>
        <end position="441"/>
    </location>
</feature>
<feature type="disulfide bond" evidence="3">
    <location>
        <begin position="479"/>
        <end position="496"/>
    </location>
</feature>
<feature type="disulfide bond" evidence="3">
    <location>
        <begin position="519"/>
        <end position="532"/>
    </location>
</feature>
<feature type="disulfide bond" evidence="3">
    <location>
        <begin position="558"/>
        <end position="573"/>
    </location>
</feature>
<feature type="sequence conflict" description="In Ref. 1; AAM62412." evidence="10" ref="1">
    <original>P</original>
    <variation>S</variation>
    <location>
        <position position="84"/>
    </location>
</feature>
<keyword id="KW-1015">Disulfide bond</keyword>
<keyword id="KW-0325">Glycoprotein</keyword>
<keyword id="KW-0328">Glycosyltransferase</keyword>
<keyword id="KW-0333">Golgi apparatus</keyword>
<keyword id="KW-0430">Lectin</keyword>
<keyword id="KW-0464">Manganese</keyword>
<keyword id="KW-0472">Membrane</keyword>
<keyword id="KW-0479">Metal-binding</keyword>
<keyword id="KW-1185">Reference proteome</keyword>
<keyword id="KW-0735">Signal-anchor</keyword>
<keyword id="KW-0808">Transferase</keyword>
<keyword id="KW-0812">Transmembrane</keyword>
<keyword id="KW-1133">Transmembrane helix</keyword>
<reference key="1">
    <citation type="journal article" date="2002" name="J. Biol. Chem.">
        <title>Functional conservation of subfamilies of putative UDP-N-acetylgalactosamine:polypeptide N-acetylgalactosaminyltransferases in Drosophila, Caenorhabditis elegans, and mammals. One subfamily composed of l(2)35Aa is essential in Drosophila.</title>
        <authorList>
            <person name="Schwientek T."/>
            <person name="Bennett E.P."/>
            <person name="Flores C."/>
            <person name="Thacker J."/>
            <person name="Hollmann M."/>
            <person name="Reis C.A."/>
            <person name="Behrens J."/>
            <person name="Mandel U."/>
            <person name="Keck B."/>
            <person name="Schaefer M.A."/>
            <person name="Haselmann K."/>
            <person name="Zubarev R."/>
            <person name="Roepstorff P."/>
            <person name="Burchell J.M."/>
            <person name="Taylor-Papadimitriou J."/>
            <person name="Hollingsworth M.A."/>
            <person name="Clausen H."/>
        </authorList>
    </citation>
    <scope>NUCLEOTIDE SEQUENCE [MRNA]</scope>
    <scope>FUNCTION</scope>
    <scope>CATALYTIC ACTIVITY</scope>
    <scope>PATHWAY</scope>
</reference>
<reference key="2">
    <citation type="journal article" date="2003" name="J. Biol. Chem.">
        <title>Functional characterization and expression analysis of members of the UDP-GalNAc:polypeptide N-acetylgalactosaminyltransferase family from Drosophila melanogaster.</title>
        <authorList>
            <person name="Ten Hagen K.G."/>
            <person name="Tran D.T."/>
            <person name="Gerken T.A."/>
            <person name="Stein D.S."/>
            <person name="Zhang Z."/>
        </authorList>
    </citation>
    <scope>NUCLEOTIDE SEQUENCE [MRNA]</scope>
    <scope>FUNCTION</scope>
    <scope>CATALYTIC ACTIVITY</scope>
    <scope>PATHWAY</scope>
    <scope>TISSUE SPECIFICITY</scope>
    <scope>DEVELOPMENTAL STAGE</scope>
    <source>
        <strain>Canton-S</strain>
        <tissue>Embryo</tissue>
    </source>
</reference>
<reference key="3">
    <citation type="journal article" date="2000" name="Science">
        <title>The genome sequence of Drosophila melanogaster.</title>
        <authorList>
            <person name="Adams M.D."/>
            <person name="Celniker S.E."/>
            <person name="Holt R.A."/>
            <person name="Evans C.A."/>
            <person name="Gocayne J.D."/>
            <person name="Amanatides P.G."/>
            <person name="Scherer S.E."/>
            <person name="Li P.W."/>
            <person name="Hoskins R.A."/>
            <person name="Galle R.F."/>
            <person name="George R.A."/>
            <person name="Lewis S.E."/>
            <person name="Richards S."/>
            <person name="Ashburner M."/>
            <person name="Henderson S.N."/>
            <person name="Sutton G.G."/>
            <person name="Wortman J.R."/>
            <person name="Yandell M.D."/>
            <person name="Zhang Q."/>
            <person name="Chen L.X."/>
            <person name="Brandon R.C."/>
            <person name="Rogers Y.-H.C."/>
            <person name="Blazej R.G."/>
            <person name="Champe M."/>
            <person name="Pfeiffer B.D."/>
            <person name="Wan K.H."/>
            <person name="Doyle C."/>
            <person name="Baxter E.G."/>
            <person name="Helt G."/>
            <person name="Nelson C.R."/>
            <person name="Miklos G.L.G."/>
            <person name="Abril J.F."/>
            <person name="Agbayani A."/>
            <person name="An H.-J."/>
            <person name="Andrews-Pfannkoch C."/>
            <person name="Baldwin D."/>
            <person name="Ballew R.M."/>
            <person name="Basu A."/>
            <person name="Baxendale J."/>
            <person name="Bayraktaroglu L."/>
            <person name="Beasley E.M."/>
            <person name="Beeson K.Y."/>
            <person name="Benos P.V."/>
            <person name="Berman B.P."/>
            <person name="Bhandari D."/>
            <person name="Bolshakov S."/>
            <person name="Borkova D."/>
            <person name="Botchan M.R."/>
            <person name="Bouck J."/>
            <person name="Brokstein P."/>
            <person name="Brottier P."/>
            <person name="Burtis K.C."/>
            <person name="Busam D.A."/>
            <person name="Butler H."/>
            <person name="Cadieu E."/>
            <person name="Center A."/>
            <person name="Chandra I."/>
            <person name="Cherry J.M."/>
            <person name="Cawley S."/>
            <person name="Dahlke C."/>
            <person name="Davenport L.B."/>
            <person name="Davies P."/>
            <person name="de Pablos B."/>
            <person name="Delcher A."/>
            <person name="Deng Z."/>
            <person name="Mays A.D."/>
            <person name="Dew I."/>
            <person name="Dietz S.M."/>
            <person name="Dodson K."/>
            <person name="Doup L.E."/>
            <person name="Downes M."/>
            <person name="Dugan-Rocha S."/>
            <person name="Dunkov B.C."/>
            <person name="Dunn P."/>
            <person name="Durbin K.J."/>
            <person name="Evangelista C.C."/>
            <person name="Ferraz C."/>
            <person name="Ferriera S."/>
            <person name="Fleischmann W."/>
            <person name="Fosler C."/>
            <person name="Gabrielian A.E."/>
            <person name="Garg N.S."/>
            <person name="Gelbart W.M."/>
            <person name="Glasser K."/>
            <person name="Glodek A."/>
            <person name="Gong F."/>
            <person name="Gorrell J.H."/>
            <person name="Gu Z."/>
            <person name="Guan P."/>
            <person name="Harris M."/>
            <person name="Harris N.L."/>
            <person name="Harvey D.A."/>
            <person name="Heiman T.J."/>
            <person name="Hernandez J.R."/>
            <person name="Houck J."/>
            <person name="Hostin D."/>
            <person name="Houston K.A."/>
            <person name="Howland T.J."/>
            <person name="Wei M.-H."/>
            <person name="Ibegwam C."/>
            <person name="Jalali M."/>
            <person name="Kalush F."/>
            <person name="Karpen G.H."/>
            <person name="Ke Z."/>
            <person name="Kennison J.A."/>
            <person name="Ketchum K.A."/>
            <person name="Kimmel B.E."/>
            <person name="Kodira C.D."/>
            <person name="Kraft C.L."/>
            <person name="Kravitz S."/>
            <person name="Kulp D."/>
            <person name="Lai Z."/>
            <person name="Lasko P."/>
            <person name="Lei Y."/>
            <person name="Levitsky A.A."/>
            <person name="Li J.H."/>
            <person name="Li Z."/>
            <person name="Liang Y."/>
            <person name="Lin X."/>
            <person name="Liu X."/>
            <person name="Mattei B."/>
            <person name="McIntosh T.C."/>
            <person name="McLeod M.P."/>
            <person name="McPherson D."/>
            <person name="Merkulov G."/>
            <person name="Milshina N.V."/>
            <person name="Mobarry C."/>
            <person name="Morris J."/>
            <person name="Moshrefi A."/>
            <person name="Mount S.M."/>
            <person name="Moy M."/>
            <person name="Murphy B."/>
            <person name="Murphy L."/>
            <person name="Muzny D.M."/>
            <person name="Nelson D.L."/>
            <person name="Nelson D.R."/>
            <person name="Nelson K.A."/>
            <person name="Nixon K."/>
            <person name="Nusskern D.R."/>
            <person name="Pacleb J.M."/>
            <person name="Palazzolo M."/>
            <person name="Pittman G.S."/>
            <person name="Pan S."/>
            <person name="Pollard J."/>
            <person name="Puri V."/>
            <person name="Reese M.G."/>
            <person name="Reinert K."/>
            <person name="Remington K."/>
            <person name="Saunders R.D.C."/>
            <person name="Scheeler F."/>
            <person name="Shen H."/>
            <person name="Shue B.C."/>
            <person name="Siden-Kiamos I."/>
            <person name="Simpson M."/>
            <person name="Skupski M.P."/>
            <person name="Smith T.J."/>
            <person name="Spier E."/>
            <person name="Spradling A.C."/>
            <person name="Stapleton M."/>
            <person name="Strong R."/>
            <person name="Sun E."/>
            <person name="Svirskas R."/>
            <person name="Tector C."/>
            <person name="Turner R."/>
            <person name="Venter E."/>
            <person name="Wang A.H."/>
            <person name="Wang X."/>
            <person name="Wang Z.-Y."/>
            <person name="Wassarman D.A."/>
            <person name="Weinstock G.M."/>
            <person name="Weissenbach J."/>
            <person name="Williams S.M."/>
            <person name="Woodage T."/>
            <person name="Worley K.C."/>
            <person name="Wu D."/>
            <person name="Yang S."/>
            <person name="Yao Q.A."/>
            <person name="Ye J."/>
            <person name="Yeh R.-F."/>
            <person name="Zaveri J.S."/>
            <person name="Zhan M."/>
            <person name="Zhang G."/>
            <person name="Zhao Q."/>
            <person name="Zheng L."/>
            <person name="Zheng X.H."/>
            <person name="Zhong F.N."/>
            <person name="Zhong W."/>
            <person name="Zhou X."/>
            <person name="Zhu S.C."/>
            <person name="Zhu X."/>
            <person name="Smith H.O."/>
            <person name="Gibbs R.A."/>
            <person name="Myers E.W."/>
            <person name="Rubin G.M."/>
            <person name="Venter J.C."/>
        </authorList>
    </citation>
    <scope>NUCLEOTIDE SEQUENCE [LARGE SCALE GENOMIC DNA]</scope>
    <source>
        <strain>Berkeley</strain>
    </source>
</reference>
<reference key="4">
    <citation type="journal article" date="2002" name="Genome Biol.">
        <title>Annotation of the Drosophila melanogaster euchromatic genome: a systematic review.</title>
        <authorList>
            <person name="Misra S."/>
            <person name="Crosby M.A."/>
            <person name="Mungall C.J."/>
            <person name="Matthews B.B."/>
            <person name="Campbell K.S."/>
            <person name="Hradecky P."/>
            <person name="Huang Y."/>
            <person name="Kaminker J.S."/>
            <person name="Millburn G.H."/>
            <person name="Prochnik S.E."/>
            <person name="Smith C.D."/>
            <person name="Tupy J.L."/>
            <person name="Whitfield E.J."/>
            <person name="Bayraktaroglu L."/>
            <person name="Berman B.P."/>
            <person name="Bettencourt B.R."/>
            <person name="Celniker S.E."/>
            <person name="de Grey A.D.N.J."/>
            <person name="Drysdale R.A."/>
            <person name="Harris N.L."/>
            <person name="Richter J."/>
            <person name="Russo S."/>
            <person name="Schroeder A.J."/>
            <person name="Shu S.Q."/>
            <person name="Stapleton M."/>
            <person name="Yamada C."/>
            <person name="Ashburner M."/>
            <person name="Gelbart W.M."/>
            <person name="Rubin G.M."/>
            <person name="Lewis S.E."/>
        </authorList>
    </citation>
    <scope>GENOME REANNOTATION</scope>
    <source>
        <strain>Berkeley</strain>
    </source>
</reference>
<reference key="5">
    <citation type="submission" date="2004-10" db="EMBL/GenBank/DDBJ databases">
        <authorList>
            <person name="Stapleton M."/>
            <person name="Carlson J.W."/>
            <person name="Chavez C."/>
            <person name="Frise E."/>
            <person name="George R.A."/>
            <person name="Pacleb J.M."/>
            <person name="Park S."/>
            <person name="Wan K.H."/>
            <person name="Yu C."/>
            <person name="Rubin G.M."/>
            <person name="Celniker S.E."/>
        </authorList>
    </citation>
    <scope>NUCLEOTIDE SEQUENCE [LARGE SCALE MRNA]</scope>
    <source>
        <strain>Berkeley</strain>
        <tissue>Embryo</tissue>
    </source>
</reference>
<reference key="6">
    <citation type="journal article" date="2002" name="Genome Biol.">
        <title>A Drosophila full-length cDNA resource.</title>
        <authorList>
            <person name="Stapleton M."/>
            <person name="Carlson J.W."/>
            <person name="Brokstein P."/>
            <person name="Yu C."/>
            <person name="Champe M."/>
            <person name="George R.A."/>
            <person name="Guarin H."/>
            <person name="Kronmiller B."/>
            <person name="Pacleb J.M."/>
            <person name="Park S."/>
            <person name="Wan K.H."/>
            <person name="Rubin G.M."/>
            <person name="Celniker S.E."/>
        </authorList>
    </citation>
    <scope>NUCLEOTIDE SEQUENCE [LARGE SCALE MRNA] OF 101-591</scope>
    <source>
        <strain>Berkeley</strain>
        <tissue>Embryo</tissue>
    </source>
</reference>
<reference key="7">
    <citation type="journal article" date="2006" name="Glycobiology">
        <title>Expression of the UDP-GalNAc: polypeptide N-acetylgalactosaminyltransferase family is spatially and temporally regulated during Drosophila development.</title>
        <authorList>
            <person name="Tian E."/>
            <person name="Ten Hagen K.G."/>
        </authorList>
    </citation>
    <scope>TISSUE SPECIFICITY</scope>
    <scope>DEVELOPMENTAL STAGE</scope>
</reference>
<reference key="8">
    <citation type="journal article" date="2010" name="J. Biol. Chem.">
        <title>Dissecting the biological role of mucin-type O-glycosylation using RNA interference in Drosophila cell culture.</title>
        <authorList>
            <person name="Zhang L."/>
            <person name="Ten Hagen K.G."/>
        </authorList>
    </citation>
    <scope>FUNCTION</scope>
</reference>
<reference key="9">
    <citation type="journal article" date="2012" name="J. Biol. Chem.">
        <title>Multiple members of the UDP-GalNAc: polypeptide N-acetylgalactosaminyltransferase family are essential for viability in Drosophila.</title>
        <authorList>
            <person name="Tran D.T."/>
            <person name="Zhang L."/>
            <person name="Zhang Y."/>
            <person name="Tian E."/>
            <person name="Earl L.A."/>
            <person name="Ten Hagen K.G."/>
        </authorList>
    </citation>
    <scope>DISRUPTION PHENOTYPE</scope>
</reference>
<evidence type="ECO:0000250" key="1"/>
<evidence type="ECO:0000255" key="2"/>
<evidence type="ECO:0000255" key="3">
    <source>
        <dbReference type="PROSITE-ProRule" id="PRU00174"/>
    </source>
</evidence>
<evidence type="ECO:0000256" key="4">
    <source>
        <dbReference type="SAM" id="MobiDB-lite"/>
    </source>
</evidence>
<evidence type="ECO:0000269" key="5">
    <source>
    </source>
</evidence>
<evidence type="ECO:0000269" key="6">
    <source>
    </source>
</evidence>
<evidence type="ECO:0000269" key="7">
    <source>
    </source>
</evidence>
<evidence type="ECO:0000269" key="8">
    <source>
    </source>
</evidence>
<evidence type="ECO:0000269" key="9">
    <source>
    </source>
</evidence>
<evidence type="ECO:0000305" key="10"/>
<evidence type="ECO:0000305" key="11">
    <source>
    </source>
</evidence>
<evidence type="ECO:0000305" key="12">
    <source>
    </source>
</evidence>
<evidence type="ECO:0000312" key="13">
    <source>
        <dbReference type="FlyBase" id="FBgn0030930"/>
    </source>
</evidence>
<name>GALT7_DROME</name>
<comment type="function">
    <text evidence="5 6 8">Glycopeptide transferase involved in O-linked oligosaccharide biosynthesis, which catalyzes the transfer of an N-acetyl-D-galactosamine residue to an already glycosylated peptide (PubMed:11925450, PubMed:12829714). In contrast to other proteins of the family, it does not act as a peptide transferase that transfers GalNAc onto serine or threonine residue on the protein receptor, but instead requires the prior addition of a GalNAc on a peptide before adding additional GalNAc moieties (PubMed:11925450). Some peptide transferase activity is however not excluded, considering that its appropriate peptide substrate may remain unidentified. Prefers the monoglycosylated Muc5AC-3 as substrate (PubMed:11925450). Might have a role in protein O-glycosylation in the Golgi and thereby in establishing and/or maintaining a proper secretory apparatus structure (PubMed:20807760).</text>
</comment>
<comment type="catalytic activity">
    <reaction evidence="5 6">
        <text>L-seryl-[protein] + UDP-N-acetyl-alpha-D-galactosamine = a 3-O-[N-acetyl-alpha-D-galactosaminyl]-L-seryl-[protein] + UDP + H(+)</text>
        <dbReference type="Rhea" id="RHEA:23956"/>
        <dbReference type="Rhea" id="RHEA-COMP:9863"/>
        <dbReference type="Rhea" id="RHEA-COMP:12788"/>
        <dbReference type="ChEBI" id="CHEBI:15378"/>
        <dbReference type="ChEBI" id="CHEBI:29999"/>
        <dbReference type="ChEBI" id="CHEBI:53604"/>
        <dbReference type="ChEBI" id="CHEBI:58223"/>
        <dbReference type="ChEBI" id="CHEBI:67138"/>
        <dbReference type="EC" id="2.4.1.41"/>
    </reaction>
</comment>
<comment type="catalytic activity">
    <reaction evidence="5 6">
        <text>L-threonyl-[protein] + UDP-N-acetyl-alpha-D-galactosamine = a 3-O-[N-acetyl-alpha-D-galactosaminyl]-L-threonyl-[protein] + UDP + H(+)</text>
        <dbReference type="Rhea" id="RHEA:52424"/>
        <dbReference type="Rhea" id="RHEA-COMP:11060"/>
        <dbReference type="Rhea" id="RHEA-COMP:11689"/>
        <dbReference type="ChEBI" id="CHEBI:15378"/>
        <dbReference type="ChEBI" id="CHEBI:30013"/>
        <dbReference type="ChEBI" id="CHEBI:58223"/>
        <dbReference type="ChEBI" id="CHEBI:67138"/>
        <dbReference type="ChEBI" id="CHEBI:87075"/>
        <dbReference type="EC" id="2.4.1.41"/>
    </reaction>
</comment>
<comment type="cofactor">
    <cofactor evidence="1">
        <name>Mn(2+)</name>
        <dbReference type="ChEBI" id="CHEBI:29035"/>
    </cofactor>
</comment>
<comment type="pathway">
    <text evidence="11 12">Protein modification; protein glycosylation.</text>
</comment>
<comment type="subcellular location">
    <subcellularLocation>
        <location evidence="1">Golgi apparatus membrane</location>
        <topology evidence="1">Single-pass type II membrane protein</topology>
    </subcellularLocation>
</comment>
<comment type="tissue specificity">
    <text evidence="6 7">Expressed in developing oocytes and egg chambers. During embryonic stages 9-11, expressed in the primordium of the foregut, midgut and hindgut. Expressed in the salivary glands from embryonic stage 12 onwards. During embryonic stages 12-13, expressed in the posterior midgut and hindgut. During embryonic stages 14-15, expression continues in the hindgut. During embryonic stages 16-17, expressed in the antennomaxillary complex. In third instar larvae, ubiquitously expressed in wing, with increased expression in the notum and ventral wing pouch, eye-antennal, leg and haltere imaginal disks.</text>
</comment>
<comment type="developmental stage">
    <text evidence="6 7">Expressed both maternally and zygotically. Expressed throughout embryonic, larval, pupal and adult stages, with increasing levels during larval development.</text>
</comment>
<comment type="domain">
    <text evidence="1">There are two conserved domains in the glycosyltransferase region: the N-terminal domain (domain A, also called GT1 motif), which is probably involved in manganese coordination and substrate binding and the C-terminal domain (domain B, also called Gal/GalNAc-T motif), which is probably involved in catalytic reaction and UDP-Gal binding.</text>
</comment>
<comment type="domain">
    <text evidence="1">The ricin B-type lectin domain binds to GalNAc and contributes to the glycopeptide specificity.</text>
</comment>
<comment type="disruption phenotype">
    <text evidence="9">RNAi-mediated knockdown in the whole body or respiratory system during development is lethal (PubMed:22157008). RNAi-mediated knockdown in hemocytes, amnioserosa, mesoderm or digestive system and reproductive tract causes no defect (PubMed:22157008).</text>
</comment>
<comment type="similarity">
    <text evidence="10">Belongs to the glycosyltransferase 2 family. GalNAc-T subfamily.</text>
</comment>
<comment type="sequence caution" evidence="10">
    <conflict type="erroneous initiation">
        <sequence resource="EMBL-CDS" id="AAL13889"/>
    </conflict>
    <text>Truncated N-terminus.</text>
</comment>
<comment type="sequence caution" evidence="10">
    <conflict type="erroneous initiation">
        <sequence resource="EMBL-CDS" id="AAL28887"/>
    </conflict>
    <text>Truncated N-terminus.</text>
</comment>
<proteinExistence type="evidence at protein level"/>
<accession>Q8MV48</accession>
<accession>A4V4R2</accession>
<accession>Q5U0W9</accession>
<accession>Q95RJ3</accession>
<accession>Q95TN2</accession>
<accession>Q9VWT6</accession>
<protein>
    <recommendedName>
        <fullName>N-acetylgalactosaminyltransferase 7</fullName>
        <ecNumber evidence="5 6">2.4.1.41</ecNumber>
    </recommendedName>
    <alternativeName>
        <fullName>Protein-UDP acetylgalactosaminyltransferase 7</fullName>
    </alternativeName>
    <alternativeName>
        <fullName>UDP-GalNAc:polypeptide N-acetylgalactosaminyltransferase 7</fullName>
        <shortName>pp-GaNTase 7</shortName>
    </alternativeName>
    <alternativeName>
        <fullName>dGalNAc-T2</fullName>
    </alternativeName>
</protein>
<organism>
    <name type="scientific">Drosophila melanogaster</name>
    <name type="common">Fruit fly</name>
    <dbReference type="NCBI Taxonomy" id="7227"/>
    <lineage>
        <taxon>Eukaryota</taxon>
        <taxon>Metazoa</taxon>
        <taxon>Ecdysozoa</taxon>
        <taxon>Arthropoda</taxon>
        <taxon>Hexapoda</taxon>
        <taxon>Insecta</taxon>
        <taxon>Pterygota</taxon>
        <taxon>Neoptera</taxon>
        <taxon>Endopterygota</taxon>
        <taxon>Diptera</taxon>
        <taxon>Brachycera</taxon>
        <taxon>Muscomorpha</taxon>
        <taxon>Ephydroidea</taxon>
        <taxon>Drosophilidae</taxon>
        <taxon>Drosophila</taxon>
        <taxon>Sophophora</taxon>
    </lineage>
</organism>
<gene>
    <name evidence="13" type="primary">Pgant7</name>
    <name evidence="13" type="synonym">GalNAc-T2</name>
    <name type="ORF">CG6394</name>
</gene>